<proteinExistence type="inferred from homology"/>
<evidence type="ECO:0000255" key="1">
    <source>
        <dbReference type="HAMAP-Rule" id="MF_01227"/>
    </source>
</evidence>
<sequence length="545" mass="60374">MTTNYIFVTGGVVSSLGKGIAAASLAAILEARGLNVTIMKLDPYINVDPGTMSPIQHGEVFVTEDGAETDLDLGHYERFIRTKMSRRNNFTTGRIYSDVLRKERRGDYLGATVQVIPHITNAIKERVLEGGEGHDVVLVEIGGTVGDIESLPFLEAIRQMAVEIGREHTLFMHLTLVPYMAASGEVKTKPTQHSVKELLSIGIQPDILICRSDRAVPANERAKIALFCNVPEKAVISLKDVDSIYKIPGLLKSQGLDDYICKRFSLNCPEANLSEWEQVIFEEANPVSEVTIGMVGKYIELPDAYKSVIEALKHGGLKNRVSVNIKLIDSQDVETRGVEILKGLDAILVPGGFGYRGVEGMITTARFARENNIPYLGICLGMQVALIDYARHVANMENANSTEFVPDCKYPVVALITEWRDENGNVEVRSEKSDLGGTMRLGAQQCQLVDDSLVRQLYNAPTIVERHRHRYEVNNMLLKQIEDAGLRVAGRSGDDQLVEIIEVPNHPWFVACQFHPEFTSTPRDGHPLFAGFVKAASEFQKRQAK</sequence>
<reference key="1">
    <citation type="journal article" date="2008" name="J. Bacteriol.">
        <title>The pangenome structure of Escherichia coli: comparative genomic analysis of E. coli commensal and pathogenic isolates.</title>
        <authorList>
            <person name="Rasko D.A."/>
            <person name="Rosovitz M.J."/>
            <person name="Myers G.S.A."/>
            <person name="Mongodin E.F."/>
            <person name="Fricke W.F."/>
            <person name="Gajer P."/>
            <person name="Crabtree J."/>
            <person name="Sebaihia M."/>
            <person name="Thomson N.R."/>
            <person name="Chaudhuri R."/>
            <person name="Henderson I.R."/>
            <person name="Sperandio V."/>
            <person name="Ravel J."/>
        </authorList>
    </citation>
    <scope>NUCLEOTIDE SEQUENCE [LARGE SCALE GENOMIC DNA]</scope>
    <source>
        <strain>HS</strain>
    </source>
</reference>
<accession>A8A3R5</accession>
<comment type="function">
    <text evidence="1">Catalyzes the ATP-dependent amination of UTP to CTP with either L-glutamine or ammonia as the source of nitrogen. Regulates intracellular CTP levels through interactions with the four ribonucleotide triphosphates.</text>
</comment>
<comment type="catalytic activity">
    <reaction evidence="1">
        <text>UTP + L-glutamine + ATP + H2O = CTP + L-glutamate + ADP + phosphate + 2 H(+)</text>
        <dbReference type="Rhea" id="RHEA:26426"/>
        <dbReference type="ChEBI" id="CHEBI:15377"/>
        <dbReference type="ChEBI" id="CHEBI:15378"/>
        <dbReference type="ChEBI" id="CHEBI:29985"/>
        <dbReference type="ChEBI" id="CHEBI:30616"/>
        <dbReference type="ChEBI" id="CHEBI:37563"/>
        <dbReference type="ChEBI" id="CHEBI:43474"/>
        <dbReference type="ChEBI" id="CHEBI:46398"/>
        <dbReference type="ChEBI" id="CHEBI:58359"/>
        <dbReference type="ChEBI" id="CHEBI:456216"/>
        <dbReference type="EC" id="6.3.4.2"/>
    </reaction>
</comment>
<comment type="catalytic activity">
    <reaction evidence="1">
        <text>L-glutamine + H2O = L-glutamate + NH4(+)</text>
        <dbReference type="Rhea" id="RHEA:15889"/>
        <dbReference type="ChEBI" id="CHEBI:15377"/>
        <dbReference type="ChEBI" id="CHEBI:28938"/>
        <dbReference type="ChEBI" id="CHEBI:29985"/>
        <dbReference type="ChEBI" id="CHEBI:58359"/>
    </reaction>
</comment>
<comment type="catalytic activity">
    <reaction evidence="1">
        <text>UTP + NH4(+) + ATP = CTP + ADP + phosphate + 2 H(+)</text>
        <dbReference type="Rhea" id="RHEA:16597"/>
        <dbReference type="ChEBI" id="CHEBI:15378"/>
        <dbReference type="ChEBI" id="CHEBI:28938"/>
        <dbReference type="ChEBI" id="CHEBI:30616"/>
        <dbReference type="ChEBI" id="CHEBI:37563"/>
        <dbReference type="ChEBI" id="CHEBI:43474"/>
        <dbReference type="ChEBI" id="CHEBI:46398"/>
        <dbReference type="ChEBI" id="CHEBI:456216"/>
    </reaction>
</comment>
<comment type="activity regulation">
    <text evidence="1">Allosterically activated by GTP, when glutamine is the substrate; GTP has no effect on the reaction when ammonia is the substrate. The allosteric effector GTP functions by stabilizing the protein conformation that binds the tetrahedral intermediate(s) formed during glutamine hydrolysis. Inhibited by the product CTP, via allosteric rather than competitive inhibition.</text>
</comment>
<comment type="pathway">
    <text evidence="1">Pyrimidine metabolism; CTP biosynthesis via de novo pathway; CTP from UDP: step 2/2.</text>
</comment>
<comment type="subunit">
    <text evidence="1">Homotetramer.</text>
</comment>
<comment type="miscellaneous">
    <text evidence="1">CTPSs have evolved a hybrid strategy for distinguishing between UTP and CTP. The overlapping regions of the product feedback inhibitory and substrate sites recognize a common feature in both compounds, the triphosphate moiety. To differentiate isosteric substrate and product pyrimidine rings, an additional pocket far from the expected kinase/ligase catalytic site, specifically recognizes the cytosine and ribose portions of the product inhibitor.</text>
</comment>
<comment type="similarity">
    <text evidence="1">Belongs to the CTP synthase family.</text>
</comment>
<dbReference type="EC" id="6.3.4.2" evidence="1"/>
<dbReference type="EMBL" id="CP000802">
    <property type="protein sequence ID" value="ABV07169.1"/>
    <property type="molecule type" value="Genomic_DNA"/>
</dbReference>
<dbReference type="RefSeq" id="WP_000210878.1">
    <property type="nucleotide sequence ID" value="NC_009800.1"/>
</dbReference>
<dbReference type="SMR" id="A8A3R5"/>
<dbReference type="MEROPS" id="C26.964"/>
<dbReference type="GeneID" id="93779218"/>
<dbReference type="KEGG" id="ecx:EcHS_A2924"/>
<dbReference type="HOGENOM" id="CLU_011675_5_0_6"/>
<dbReference type="UniPathway" id="UPA00159">
    <property type="reaction ID" value="UER00277"/>
</dbReference>
<dbReference type="GO" id="GO:0005829">
    <property type="term" value="C:cytosol"/>
    <property type="evidence" value="ECO:0007669"/>
    <property type="project" value="TreeGrafter"/>
</dbReference>
<dbReference type="GO" id="GO:0005524">
    <property type="term" value="F:ATP binding"/>
    <property type="evidence" value="ECO:0007669"/>
    <property type="project" value="UniProtKB-KW"/>
</dbReference>
<dbReference type="GO" id="GO:0003883">
    <property type="term" value="F:CTP synthase activity"/>
    <property type="evidence" value="ECO:0007669"/>
    <property type="project" value="UniProtKB-UniRule"/>
</dbReference>
<dbReference type="GO" id="GO:0004359">
    <property type="term" value="F:glutaminase activity"/>
    <property type="evidence" value="ECO:0007669"/>
    <property type="project" value="RHEA"/>
</dbReference>
<dbReference type="GO" id="GO:0042802">
    <property type="term" value="F:identical protein binding"/>
    <property type="evidence" value="ECO:0007669"/>
    <property type="project" value="TreeGrafter"/>
</dbReference>
<dbReference type="GO" id="GO:0046872">
    <property type="term" value="F:metal ion binding"/>
    <property type="evidence" value="ECO:0007669"/>
    <property type="project" value="UniProtKB-KW"/>
</dbReference>
<dbReference type="GO" id="GO:0044210">
    <property type="term" value="P:'de novo' CTP biosynthetic process"/>
    <property type="evidence" value="ECO:0007669"/>
    <property type="project" value="UniProtKB-UniRule"/>
</dbReference>
<dbReference type="GO" id="GO:0019856">
    <property type="term" value="P:pyrimidine nucleobase biosynthetic process"/>
    <property type="evidence" value="ECO:0007669"/>
    <property type="project" value="TreeGrafter"/>
</dbReference>
<dbReference type="CDD" id="cd03113">
    <property type="entry name" value="CTPS_N"/>
    <property type="match status" value="1"/>
</dbReference>
<dbReference type="CDD" id="cd01746">
    <property type="entry name" value="GATase1_CTP_Synthase"/>
    <property type="match status" value="1"/>
</dbReference>
<dbReference type="FunFam" id="3.40.50.300:FF:000009">
    <property type="entry name" value="CTP synthase"/>
    <property type="match status" value="1"/>
</dbReference>
<dbReference type="FunFam" id="3.40.50.880:FF:000002">
    <property type="entry name" value="CTP synthase"/>
    <property type="match status" value="1"/>
</dbReference>
<dbReference type="Gene3D" id="3.40.50.880">
    <property type="match status" value="1"/>
</dbReference>
<dbReference type="Gene3D" id="3.40.50.300">
    <property type="entry name" value="P-loop containing nucleotide triphosphate hydrolases"/>
    <property type="match status" value="1"/>
</dbReference>
<dbReference type="HAMAP" id="MF_01227">
    <property type="entry name" value="PyrG"/>
    <property type="match status" value="1"/>
</dbReference>
<dbReference type="InterPro" id="IPR029062">
    <property type="entry name" value="Class_I_gatase-like"/>
</dbReference>
<dbReference type="InterPro" id="IPR004468">
    <property type="entry name" value="CTP_synthase"/>
</dbReference>
<dbReference type="InterPro" id="IPR017456">
    <property type="entry name" value="CTP_synthase_N"/>
</dbReference>
<dbReference type="InterPro" id="IPR017926">
    <property type="entry name" value="GATASE"/>
</dbReference>
<dbReference type="InterPro" id="IPR033828">
    <property type="entry name" value="GATase1_CTP_Synthase"/>
</dbReference>
<dbReference type="InterPro" id="IPR027417">
    <property type="entry name" value="P-loop_NTPase"/>
</dbReference>
<dbReference type="NCBIfam" id="NF003792">
    <property type="entry name" value="PRK05380.1"/>
    <property type="match status" value="1"/>
</dbReference>
<dbReference type="NCBIfam" id="TIGR00337">
    <property type="entry name" value="PyrG"/>
    <property type="match status" value="1"/>
</dbReference>
<dbReference type="PANTHER" id="PTHR11550">
    <property type="entry name" value="CTP SYNTHASE"/>
    <property type="match status" value="1"/>
</dbReference>
<dbReference type="PANTHER" id="PTHR11550:SF0">
    <property type="entry name" value="CTP SYNTHASE-RELATED"/>
    <property type="match status" value="1"/>
</dbReference>
<dbReference type="Pfam" id="PF06418">
    <property type="entry name" value="CTP_synth_N"/>
    <property type="match status" value="1"/>
</dbReference>
<dbReference type="Pfam" id="PF00117">
    <property type="entry name" value="GATase"/>
    <property type="match status" value="1"/>
</dbReference>
<dbReference type="SUPFAM" id="SSF52317">
    <property type="entry name" value="Class I glutamine amidotransferase-like"/>
    <property type="match status" value="1"/>
</dbReference>
<dbReference type="SUPFAM" id="SSF52540">
    <property type="entry name" value="P-loop containing nucleoside triphosphate hydrolases"/>
    <property type="match status" value="1"/>
</dbReference>
<dbReference type="PROSITE" id="PS51273">
    <property type="entry name" value="GATASE_TYPE_1"/>
    <property type="match status" value="1"/>
</dbReference>
<gene>
    <name evidence="1" type="primary">pyrG</name>
    <name type="ordered locus">EcHS_A2924</name>
</gene>
<protein>
    <recommendedName>
        <fullName evidence="1">CTP synthase</fullName>
        <ecNumber evidence="1">6.3.4.2</ecNumber>
    </recommendedName>
    <alternativeName>
        <fullName evidence="1">Cytidine 5'-triphosphate synthase</fullName>
    </alternativeName>
    <alternativeName>
        <fullName evidence="1">Cytidine triphosphate synthetase</fullName>
        <shortName evidence="1">CTP synthetase</shortName>
        <shortName evidence="1">CTPS</shortName>
    </alternativeName>
    <alternativeName>
        <fullName evidence="1">UTP--ammonia ligase</fullName>
    </alternativeName>
</protein>
<name>PYRG_ECOHS</name>
<feature type="chain" id="PRO_1000139445" description="CTP synthase">
    <location>
        <begin position="1"/>
        <end position="545"/>
    </location>
</feature>
<feature type="domain" description="Glutamine amidotransferase type-1" evidence="1">
    <location>
        <begin position="291"/>
        <end position="542"/>
    </location>
</feature>
<feature type="region of interest" description="Amidoligase domain" evidence="1">
    <location>
        <begin position="1"/>
        <end position="266"/>
    </location>
</feature>
<feature type="active site" description="Nucleophile; for glutamine hydrolysis" evidence="1">
    <location>
        <position position="379"/>
    </location>
</feature>
<feature type="active site" evidence="1">
    <location>
        <position position="515"/>
    </location>
</feature>
<feature type="active site" evidence="1">
    <location>
        <position position="517"/>
    </location>
</feature>
<feature type="binding site" evidence="1">
    <location>
        <position position="14"/>
    </location>
    <ligand>
        <name>CTP</name>
        <dbReference type="ChEBI" id="CHEBI:37563"/>
        <note>allosteric inhibitor</note>
    </ligand>
</feature>
<feature type="binding site" evidence="1">
    <location>
        <position position="14"/>
    </location>
    <ligand>
        <name>UTP</name>
        <dbReference type="ChEBI" id="CHEBI:46398"/>
    </ligand>
</feature>
<feature type="binding site" evidence="1">
    <location>
        <begin position="15"/>
        <end position="20"/>
    </location>
    <ligand>
        <name>ATP</name>
        <dbReference type="ChEBI" id="CHEBI:30616"/>
    </ligand>
</feature>
<feature type="binding site" evidence="1">
    <location>
        <position position="72"/>
    </location>
    <ligand>
        <name>ATP</name>
        <dbReference type="ChEBI" id="CHEBI:30616"/>
    </ligand>
</feature>
<feature type="binding site" evidence="1">
    <location>
        <position position="72"/>
    </location>
    <ligand>
        <name>Mg(2+)</name>
        <dbReference type="ChEBI" id="CHEBI:18420"/>
    </ligand>
</feature>
<feature type="binding site" evidence="1">
    <location>
        <position position="140"/>
    </location>
    <ligand>
        <name>Mg(2+)</name>
        <dbReference type="ChEBI" id="CHEBI:18420"/>
    </ligand>
</feature>
<feature type="binding site" evidence="1">
    <location>
        <begin position="147"/>
        <end position="149"/>
    </location>
    <ligand>
        <name>CTP</name>
        <dbReference type="ChEBI" id="CHEBI:37563"/>
        <note>allosteric inhibitor</note>
    </ligand>
</feature>
<feature type="binding site" evidence="1">
    <location>
        <begin position="187"/>
        <end position="192"/>
    </location>
    <ligand>
        <name>CTP</name>
        <dbReference type="ChEBI" id="CHEBI:37563"/>
        <note>allosteric inhibitor</note>
    </ligand>
</feature>
<feature type="binding site" evidence="1">
    <location>
        <begin position="187"/>
        <end position="192"/>
    </location>
    <ligand>
        <name>UTP</name>
        <dbReference type="ChEBI" id="CHEBI:46398"/>
    </ligand>
</feature>
<feature type="binding site" evidence="1">
    <location>
        <position position="223"/>
    </location>
    <ligand>
        <name>CTP</name>
        <dbReference type="ChEBI" id="CHEBI:37563"/>
        <note>allosteric inhibitor</note>
    </ligand>
</feature>
<feature type="binding site" evidence="1">
    <location>
        <position position="223"/>
    </location>
    <ligand>
        <name>UTP</name>
        <dbReference type="ChEBI" id="CHEBI:46398"/>
    </ligand>
</feature>
<feature type="binding site" evidence="1">
    <location>
        <begin position="239"/>
        <end position="241"/>
    </location>
    <ligand>
        <name>ATP</name>
        <dbReference type="ChEBI" id="CHEBI:30616"/>
    </ligand>
</feature>
<feature type="binding site" evidence="1">
    <location>
        <position position="352"/>
    </location>
    <ligand>
        <name>L-glutamine</name>
        <dbReference type="ChEBI" id="CHEBI:58359"/>
    </ligand>
</feature>
<feature type="binding site" evidence="1">
    <location>
        <begin position="380"/>
        <end position="383"/>
    </location>
    <ligand>
        <name>L-glutamine</name>
        <dbReference type="ChEBI" id="CHEBI:58359"/>
    </ligand>
</feature>
<feature type="binding site" evidence="1">
    <location>
        <position position="403"/>
    </location>
    <ligand>
        <name>L-glutamine</name>
        <dbReference type="ChEBI" id="CHEBI:58359"/>
    </ligand>
</feature>
<feature type="binding site" evidence="1">
    <location>
        <position position="470"/>
    </location>
    <ligand>
        <name>L-glutamine</name>
        <dbReference type="ChEBI" id="CHEBI:58359"/>
    </ligand>
</feature>
<organism>
    <name type="scientific">Escherichia coli O9:H4 (strain HS)</name>
    <dbReference type="NCBI Taxonomy" id="331112"/>
    <lineage>
        <taxon>Bacteria</taxon>
        <taxon>Pseudomonadati</taxon>
        <taxon>Pseudomonadota</taxon>
        <taxon>Gammaproteobacteria</taxon>
        <taxon>Enterobacterales</taxon>
        <taxon>Enterobacteriaceae</taxon>
        <taxon>Escherichia</taxon>
    </lineage>
</organism>
<keyword id="KW-0067">ATP-binding</keyword>
<keyword id="KW-0315">Glutamine amidotransferase</keyword>
<keyword id="KW-0436">Ligase</keyword>
<keyword id="KW-0460">Magnesium</keyword>
<keyword id="KW-0479">Metal-binding</keyword>
<keyword id="KW-0547">Nucleotide-binding</keyword>
<keyword id="KW-0665">Pyrimidine biosynthesis</keyword>